<evidence type="ECO:0000255" key="1">
    <source>
        <dbReference type="HAMAP-Rule" id="MF_00456"/>
    </source>
</evidence>
<sequence>MSDSQTLVVKLGTSVLTGGSRRLNRAHIVELVRQCAQLHAAGHRIVIVTSGAIAAGREHLGYPELPATIASKQLLAAVGQSRLIQLWEQLFSIYGIHVGQMLLTRADMEDRERFLNARDTLRALLDNNIVPVINENDAVATAEIKVGDNDNLSALAAILAGADKLLLLTDQKGLYTADPRSNPQAELIKDVYGIDDALRAIAGDSVSGLGTGGMSTKLQAADVACRAGIDTIIAAGSKPGVIGDVMEGISVGTLFHAQATPLENRKRWIFGAPPAGEITVDEGATAAILERGSSLLPKGIKSVTGNFSRGEVIRICNLEGRDIAHGVSRYNSDALRRIAGHHSQEIDAILGYEYGPVAVHRDDMITR</sequence>
<name>PROB_ECO5E</name>
<proteinExistence type="inferred from homology"/>
<comment type="function">
    <text evidence="1">Catalyzes the transfer of a phosphate group to glutamate to form L-glutamate 5-phosphate.</text>
</comment>
<comment type="catalytic activity">
    <reaction evidence="1">
        <text>L-glutamate + ATP = L-glutamyl 5-phosphate + ADP</text>
        <dbReference type="Rhea" id="RHEA:14877"/>
        <dbReference type="ChEBI" id="CHEBI:29985"/>
        <dbReference type="ChEBI" id="CHEBI:30616"/>
        <dbReference type="ChEBI" id="CHEBI:58274"/>
        <dbReference type="ChEBI" id="CHEBI:456216"/>
        <dbReference type="EC" id="2.7.2.11"/>
    </reaction>
</comment>
<comment type="pathway">
    <text evidence="1">Amino-acid biosynthesis; L-proline biosynthesis; L-glutamate 5-semialdehyde from L-glutamate: step 1/2.</text>
</comment>
<comment type="subcellular location">
    <subcellularLocation>
        <location evidence="1">Cytoplasm</location>
    </subcellularLocation>
</comment>
<comment type="similarity">
    <text evidence="1">Belongs to the glutamate 5-kinase family.</text>
</comment>
<organism>
    <name type="scientific">Escherichia coli O157:H7 (strain EC4115 / EHEC)</name>
    <dbReference type="NCBI Taxonomy" id="444450"/>
    <lineage>
        <taxon>Bacteria</taxon>
        <taxon>Pseudomonadati</taxon>
        <taxon>Pseudomonadota</taxon>
        <taxon>Gammaproteobacteria</taxon>
        <taxon>Enterobacterales</taxon>
        <taxon>Enterobacteriaceae</taxon>
        <taxon>Escherichia</taxon>
    </lineage>
</organism>
<gene>
    <name evidence="1" type="primary">proB</name>
    <name type="ordered locus">ECH74115_0287</name>
</gene>
<reference key="1">
    <citation type="journal article" date="2011" name="Proc. Natl. Acad. Sci. U.S.A.">
        <title>Genomic anatomy of Escherichia coli O157:H7 outbreaks.</title>
        <authorList>
            <person name="Eppinger M."/>
            <person name="Mammel M.K."/>
            <person name="Leclerc J.E."/>
            <person name="Ravel J."/>
            <person name="Cebula T.A."/>
        </authorList>
    </citation>
    <scope>NUCLEOTIDE SEQUENCE [LARGE SCALE GENOMIC DNA]</scope>
    <source>
        <strain>EC4115 / EHEC</strain>
    </source>
</reference>
<protein>
    <recommendedName>
        <fullName evidence="1">Glutamate 5-kinase</fullName>
        <ecNumber evidence="1">2.7.2.11</ecNumber>
    </recommendedName>
    <alternativeName>
        <fullName evidence="1">Gamma-glutamyl kinase</fullName>
        <shortName evidence="1">GK</shortName>
    </alternativeName>
</protein>
<accession>B5Z1I6</accession>
<feature type="chain" id="PRO_1000125229" description="Glutamate 5-kinase">
    <location>
        <begin position="1"/>
        <end position="367"/>
    </location>
</feature>
<feature type="domain" description="PUA" evidence="1">
    <location>
        <begin position="275"/>
        <end position="353"/>
    </location>
</feature>
<feature type="binding site" evidence="1">
    <location>
        <position position="10"/>
    </location>
    <ligand>
        <name>ATP</name>
        <dbReference type="ChEBI" id="CHEBI:30616"/>
    </ligand>
</feature>
<feature type="binding site" evidence="1">
    <location>
        <position position="50"/>
    </location>
    <ligand>
        <name>substrate</name>
    </ligand>
</feature>
<feature type="binding site" evidence="1">
    <location>
        <position position="137"/>
    </location>
    <ligand>
        <name>substrate</name>
    </ligand>
</feature>
<feature type="binding site" evidence="1">
    <location>
        <position position="149"/>
    </location>
    <ligand>
        <name>substrate</name>
    </ligand>
</feature>
<feature type="binding site" evidence="1">
    <location>
        <begin position="169"/>
        <end position="170"/>
    </location>
    <ligand>
        <name>ATP</name>
        <dbReference type="ChEBI" id="CHEBI:30616"/>
    </ligand>
</feature>
<feature type="binding site" evidence="1">
    <location>
        <begin position="211"/>
        <end position="217"/>
    </location>
    <ligand>
        <name>ATP</name>
        <dbReference type="ChEBI" id="CHEBI:30616"/>
    </ligand>
</feature>
<dbReference type="EC" id="2.7.2.11" evidence="1"/>
<dbReference type="EMBL" id="CP001164">
    <property type="protein sequence ID" value="ACI37364.1"/>
    <property type="molecule type" value="Genomic_DNA"/>
</dbReference>
<dbReference type="RefSeq" id="WP_001285288.1">
    <property type="nucleotide sequence ID" value="NC_011353.1"/>
</dbReference>
<dbReference type="SMR" id="B5Z1I6"/>
<dbReference type="GeneID" id="93777151"/>
<dbReference type="KEGG" id="ecf:ECH74115_0287"/>
<dbReference type="HOGENOM" id="CLU_025400_2_0_6"/>
<dbReference type="UniPathway" id="UPA00098">
    <property type="reaction ID" value="UER00359"/>
</dbReference>
<dbReference type="GO" id="GO:0005829">
    <property type="term" value="C:cytosol"/>
    <property type="evidence" value="ECO:0007669"/>
    <property type="project" value="TreeGrafter"/>
</dbReference>
<dbReference type="GO" id="GO:0005524">
    <property type="term" value="F:ATP binding"/>
    <property type="evidence" value="ECO:0007669"/>
    <property type="project" value="UniProtKB-KW"/>
</dbReference>
<dbReference type="GO" id="GO:0004349">
    <property type="term" value="F:glutamate 5-kinase activity"/>
    <property type="evidence" value="ECO:0007669"/>
    <property type="project" value="UniProtKB-UniRule"/>
</dbReference>
<dbReference type="GO" id="GO:0003723">
    <property type="term" value="F:RNA binding"/>
    <property type="evidence" value="ECO:0007669"/>
    <property type="project" value="InterPro"/>
</dbReference>
<dbReference type="GO" id="GO:0055129">
    <property type="term" value="P:L-proline biosynthetic process"/>
    <property type="evidence" value="ECO:0007669"/>
    <property type="project" value="UniProtKB-UniRule"/>
</dbReference>
<dbReference type="CDD" id="cd04242">
    <property type="entry name" value="AAK_G5K_ProB"/>
    <property type="match status" value="1"/>
</dbReference>
<dbReference type="CDD" id="cd21157">
    <property type="entry name" value="PUA_G5K"/>
    <property type="match status" value="1"/>
</dbReference>
<dbReference type="FunFam" id="2.30.130.10:FF:000003">
    <property type="entry name" value="Glutamate 5-kinase"/>
    <property type="match status" value="1"/>
</dbReference>
<dbReference type="FunFam" id="3.40.1160.10:FF:000006">
    <property type="entry name" value="Glutamate 5-kinase"/>
    <property type="match status" value="1"/>
</dbReference>
<dbReference type="Gene3D" id="3.40.1160.10">
    <property type="entry name" value="Acetylglutamate kinase-like"/>
    <property type="match status" value="2"/>
</dbReference>
<dbReference type="Gene3D" id="2.30.130.10">
    <property type="entry name" value="PUA domain"/>
    <property type="match status" value="1"/>
</dbReference>
<dbReference type="HAMAP" id="MF_00456">
    <property type="entry name" value="ProB"/>
    <property type="match status" value="1"/>
</dbReference>
<dbReference type="InterPro" id="IPR036393">
    <property type="entry name" value="AceGlu_kinase-like_sf"/>
</dbReference>
<dbReference type="InterPro" id="IPR001048">
    <property type="entry name" value="Asp/Glu/Uridylate_kinase"/>
</dbReference>
<dbReference type="InterPro" id="IPR041739">
    <property type="entry name" value="G5K_ProB"/>
</dbReference>
<dbReference type="InterPro" id="IPR001057">
    <property type="entry name" value="Glu/AcGlu_kinase"/>
</dbReference>
<dbReference type="InterPro" id="IPR011529">
    <property type="entry name" value="Glu_5kinase"/>
</dbReference>
<dbReference type="InterPro" id="IPR005715">
    <property type="entry name" value="Glu_5kinase/COase_Synthase"/>
</dbReference>
<dbReference type="InterPro" id="IPR019797">
    <property type="entry name" value="Glutamate_5-kinase_CS"/>
</dbReference>
<dbReference type="InterPro" id="IPR002478">
    <property type="entry name" value="PUA"/>
</dbReference>
<dbReference type="InterPro" id="IPR015947">
    <property type="entry name" value="PUA-like_sf"/>
</dbReference>
<dbReference type="InterPro" id="IPR036974">
    <property type="entry name" value="PUA_sf"/>
</dbReference>
<dbReference type="NCBIfam" id="TIGR01027">
    <property type="entry name" value="proB"/>
    <property type="match status" value="1"/>
</dbReference>
<dbReference type="PANTHER" id="PTHR43654">
    <property type="entry name" value="GLUTAMATE 5-KINASE"/>
    <property type="match status" value="1"/>
</dbReference>
<dbReference type="PANTHER" id="PTHR43654:SF1">
    <property type="entry name" value="ISOPENTENYL PHOSPHATE KINASE"/>
    <property type="match status" value="1"/>
</dbReference>
<dbReference type="Pfam" id="PF00696">
    <property type="entry name" value="AA_kinase"/>
    <property type="match status" value="1"/>
</dbReference>
<dbReference type="Pfam" id="PF01472">
    <property type="entry name" value="PUA"/>
    <property type="match status" value="1"/>
</dbReference>
<dbReference type="PIRSF" id="PIRSF000729">
    <property type="entry name" value="GK"/>
    <property type="match status" value="1"/>
</dbReference>
<dbReference type="PRINTS" id="PR00474">
    <property type="entry name" value="GLU5KINASE"/>
</dbReference>
<dbReference type="SMART" id="SM00359">
    <property type="entry name" value="PUA"/>
    <property type="match status" value="1"/>
</dbReference>
<dbReference type="SUPFAM" id="SSF53633">
    <property type="entry name" value="Carbamate kinase-like"/>
    <property type="match status" value="1"/>
</dbReference>
<dbReference type="SUPFAM" id="SSF88697">
    <property type="entry name" value="PUA domain-like"/>
    <property type="match status" value="1"/>
</dbReference>
<dbReference type="PROSITE" id="PS00902">
    <property type="entry name" value="GLUTAMATE_5_KINASE"/>
    <property type="match status" value="1"/>
</dbReference>
<dbReference type="PROSITE" id="PS50890">
    <property type="entry name" value="PUA"/>
    <property type="match status" value="1"/>
</dbReference>
<keyword id="KW-0028">Amino-acid biosynthesis</keyword>
<keyword id="KW-0067">ATP-binding</keyword>
<keyword id="KW-0963">Cytoplasm</keyword>
<keyword id="KW-0418">Kinase</keyword>
<keyword id="KW-0547">Nucleotide-binding</keyword>
<keyword id="KW-0641">Proline biosynthesis</keyword>
<keyword id="KW-0808">Transferase</keyword>